<keyword id="KW-0053">Apoptosis</keyword>
<keyword id="KW-0131">Cell cycle</keyword>
<keyword id="KW-0963">Cytoplasm</keyword>
<keyword id="KW-0472">Membrane</keyword>
<keyword id="KW-0539">Nucleus</keyword>
<keyword id="KW-1185">Reference proteome</keyword>
<keyword id="KW-0812">Transmembrane</keyword>
<keyword id="KW-1133">Transmembrane helix</keyword>
<keyword id="KW-0043">Tumor suppressor</keyword>
<reference key="1">
    <citation type="submission" date="2004-11" db="EMBL/GenBank/DDBJ databases">
        <authorList>
            <consortium name="The German cDNA consortium"/>
        </authorList>
    </citation>
    <scope>NUCLEOTIDE SEQUENCE [LARGE SCALE MRNA]</scope>
    <source>
        <tissue>Brain cortex</tissue>
    </source>
</reference>
<evidence type="ECO:0000250" key="1">
    <source>
        <dbReference type="UniProtKB" id="P62952"/>
    </source>
</evidence>
<evidence type="ECO:0000255" key="2"/>
<evidence type="ECO:0000305" key="3"/>
<sequence>MYCLQWLLPVLLIPKPLNPALWFSHSMFMGFYLLSFLLERKPCTICALVFLAALFLICYSCWGNCFLYHCSDSPLPESAHDPGVVGT</sequence>
<gene>
    <name type="primary">BLCAP</name>
</gene>
<protein>
    <recommendedName>
        <fullName evidence="3">Apoptosis inducing factor BLCAP</fullName>
    </recommendedName>
    <alternativeName>
        <fullName>Bladder cancer-associated protein</fullName>
    </alternativeName>
</protein>
<comment type="function">
    <text evidence="1">Acts as a tumor suppressor; induces growth arrest at G(1)/S checkpoint and apoptosis via RB1-dependent and p53/TP53- and NF-kappa-B-independent mechanisms. Modulates expression of genes involved in the regulation of proliferation, cell cycle and apoptosis.</text>
</comment>
<comment type="subunit">
    <text evidence="1">Interacts with RB1 (phosphorylated and unphosphorylated) (By similarity). Interacts with STAT3; the interaction is promoted by cell stimulation with IL6 and phosphorylation of STAT3 (By similarity).</text>
</comment>
<comment type="subcellular location">
    <subcellularLocation>
        <location evidence="1">Cytoplasm</location>
    </subcellularLocation>
    <subcellularLocation>
        <location evidence="1">Nucleus</location>
    </subcellularLocation>
    <subcellularLocation>
        <location evidence="2">Membrane</location>
        <topology evidence="2">Multi-pass membrane protein</topology>
    </subcellularLocation>
</comment>
<comment type="similarity">
    <text evidence="3">Belongs to the BLCAP family.</text>
</comment>
<accession>Q5R692</accession>
<accession>Q5R4Y9</accession>
<accession>Q5R568</accession>
<name>BLCAP_PONAB</name>
<organism>
    <name type="scientific">Pongo abelii</name>
    <name type="common">Sumatran orangutan</name>
    <name type="synonym">Pongo pygmaeus abelii</name>
    <dbReference type="NCBI Taxonomy" id="9601"/>
    <lineage>
        <taxon>Eukaryota</taxon>
        <taxon>Metazoa</taxon>
        <taxon>Chordata</taxon>
        <taxon>Craniata</taxon>
        <taxon>Vertebrata</taxon>
        <taxon>Euteleostomi</taxon>
        <taxon>Mammalia</taxon>
        <taxon>Eutheria</taxon>
        <taxon>Euarchontoglires</taxon>
        <taxon>Primates</taxon>
        <taxon>Haplorrhini</taxon>
        <taxon>Catarrhini</taxon>
        <taxon>Hominidae</taxon>
        <taxon>Pongo</taxon>
    </lineage>
</organism>
<feature type="chain" id="PRO_0000064852" description="Apoptosis inducing factor BLCAP">
    <location>
        <begin position="1"/>
        <end position="87"/>
    </location>
</feature>
<feature type="transmembrane region" description="Helical" evidence="2">
    <location>
        <begin position="19"/>
        <end position="39"/>
    </location>
</feature>
<feature type="transmembrane region" description="Helical" evidence="2">
    <location>
        <begin position="43"/>
        <end position="63"/>
    </location>
</feature>
<feature type="sequence conflict" description="In Ref. 1; CAH93098." evidence="3" ref="1">
    <original>Y</original>
    <variation>C</variation>
    <location>
        <position position="2"/>
    </location>
</feature>
<feature type="sequence conflict" description="In Ref. 1; CAH93098." evidence="3" ref="1">
    <original>Q</original>
    <variation>R</variation>
    <location>
        <position position="5"/>
    </location>
</feature>
<feature type="sequence conflict" description="In Ref. 1; CAH93177." evidence="3" ref="1">
    <original>S</original>
    <variation>G</variation>
    <location>
        <position position="35"/>
    </location>
</feature>
<dbReference type="EMBL" id="CR860602">
    <property type="protein sequence ID" value="CAH92724.1"/>
    <property type="molecule type" value="mRNA"/>
</dbReference>
<dbReference type="EMBL" id="CR860998">
    <property type="protein sequence ID" value="CAH93098.1"/>
    <property type="molecule type" value="mRNA"/>
</dbReference>
<dbReference type="EMBL" id="CR861099">
    <property type="protein sequence ID" value="CAH93177.1"/>
    <property type="molecule type" value="mRNA"/>
</dbReference>
<dbReference type="RefSeq" id="NP_001126870.1">
    <property type="nucleotide sequence ID" value="NM_001133398.1"/>
</dbReference>
<dbReference type="FunCoup" id="Q5R692">
    <property type="interactions" value="668"/>
</dbReference>
<dbReference type="STRING" id="9601.ENSPPYP00000012271"/>
<dbReference type="Ensembl" id="ENSPPYT00000012752.2">
    <property type="protein sequence ID" value="ENSPPYP00000012271.1"/>
    <property type="gene ID" value="ENSPPYG00000010986.2"/>
</dbReference>
<dbReference type="GeneID" id="100173882"/>
<dbReference type="KEGG" id="pon:100173882"/>
<dbReference type="CTD" id="10904"/>
<dbReference type="eggNOG" id="KOG4489">
    <property type="taxonomic scope" value="Eukaryota"/>
</dbReference>
<dbReference type="GeneTree" id="ENSGT00390000014105"/>
<dbReference type="HOGENOM" id="CLU_181908_0_0_1"/>
<dbReference type="InParanoid" id="Q5R692"/>
<dbReference type="OMA" id="FLLCYSC"/>
<dbReference type="OrthoDB" id="5772623at2759"/>
<dbReference type="TreeFam" id="TF313306"/>
<dbReference type="Proteomes" id="UP000001595">
    <property type="component" value="Chromosome 20"/>
</dbReference>
<dbReference type="GO" id="GO:0005737">
    <property type="term" value="C:cytoplasm"/>
    <property type="evidence" value="ECO:0007669"/>
    <property type="project" value="UniProtKB-SubCell"/>
</dbReference>
<dbReference type="GO" id="GO:0016020">
    <property type="term" value="C:membrane"/>
    <property type="evidence" value="ECO:0007669"/>
    <property type="project" value="UniProtKB-SubCell"/>
</dbReference>
<dbReference type="GO" id="GO:0005634">
    <property type="term" value="C:nucleus"/>
    <property type="evidence" value="ECO:0007669"/>
    <property type="project" value="UniProtKB-SubCell"/>
</dbReference>
<dbReference type="GO" id="GO:0030262">
    <property type="term" value="P:apoptotic nuclear changes"/>
    <property type="evidence" value="ECO:0007669"/>
    <property type="project" value="Ensembl"/>
</dbReference>
<dbReference type="InterPro" id="IPR009598">
    <property type="entry name" value="BCALP"/>
</dbReference>
<dbReference type="PANTHER" id="PTHR13259">
    <property type="entry name" value="BLADDER CANCER 10 KD PROTEIN HOMOLOG"/>
    <property type="match status" value="1"/>
</dbReference>
<dbReference type="PANTHER" id="PTHR13259:SF1">
    <property type="entry name" value="BLADDER CANCER-ASSOCIATED PROTEIN"/>
    <property type="match status" value="1"/>
</dbReference>
<dbReference type="Pfam" id="PF06726">
    <property type="entry name" value="BC10"/>
    <property type="match status" value="1"/>
</dbReference>
<dbReference type="SMART" id="SM01396">
    <property type="entry name" value="BC10"/>
    <property type="match status" value="1"/>
</dbReference>
<proteinExistence type="inferred from homology"/>